<accession>Q43560</accession>
<name>PR1_MEDSA</name>
<organism>
    <name type="scientific">Medicago sativa</name>
    <name type="common">Alfalfa</name>
    <dbReference type="NCBI Taxonomy" id="3879"/>
    <lineage>
        <taxon>Eukaryota</taxon>
        <taxon>Viridiplantae</taxon>
        <taxon>Streptophyta</taxon>
        <taxon>Embryophyta</taxon>
        <taxon>Tracheophyta</taxon>
        <taxon>Spermatophyta</taxon>
        <taxon>Magnoliopsida</taxon>
        <taxon>eudicotyledons</taxon>
        <taxon>Gunneridae</taxon>
        <taxon>Pentapetalae</taxon>
        <taxon>rosids</taxon>
        <taxon>fabids</taxon>
        <taxon>Fabales</taxon>
        <taxon>Fabaceae</taxon>
        <taxon>Papilionoideae</taxon>
        <taxon>50 kb inversion clade</taxon>
        <taxon>NPAAA clade</taxon>
        <taxon>Hologalegina</taxon>
        <taxon>IRL clade</taxon>
        <taxon>Trifolieae</taxon>
        <taxon>Medicago</taxon>
    </lineage>
</organism>
<gene>
    <name type="primary">MSPR10-1</name>
</gene>
<sequence>MGVFNFEDETTSIVAPARLYKALVTDSDNLIPKVIDAIQSIEIVEGNGGAGTIKKLTFVEGGETKYDLHKVDLVDDVNFAYNYSIVGGGGLPDTVEKISFESKLSAGPDGGSTAKLTVKYFTKGDAAPSEEEIKGGKARGDGLFKALEGYVLANPDY</sequence>
<reference key="1">
    <citation type="journal article" date="1996" name="Mol. Plant Microbe Interact.">
        <title>Defense reaction in Medicago sativa: a gene encoding a class 10 PR protein is expressed in vascular bundles.</title>
        <authorList>
            <person name="Breda C."/>
            <person name="Sallaud C."/>
            <person name="El-Turk J."/>
            <person name="Buffard D."/>
            <person name="De Kozak I."/>
            <person name="Esnault R."/>
            <person name="Kondorosi A."/>
        </authorList>
    </citation>
    <scope>NUCLEOTIDE SEQUENCE [MRNA]</scope>
    <source>
        <strain>cv. Nagyszenasi</strain>
        <tissue>Leaf</tissue>
    </source>
</reference>
<protein>
    <recommendedName>
        <fullName>Class-10 pathogenesis-related protein 1</fullName>
    </recommendedName>
    <alternativeName>
        <fullName>MSPR10-1</fullName>
    </alternativeName>
</protein>
<feature type="chain" id="PRO_0000154200" description="Class-10 pathogenesis-related protein 1">
    <location>
        <begin position="1"/>
        <end position="157"/>
    </location>
</feature>
<proteinExistence type="evidence at transcript level"/>
<evidence type="ECO:0000305" key="1"/>
<keyword id="KW-0963">Cytoplasm</keyword>
<keyword id="KW-0568">Pathogenesis-related protein</keyword>
<keyword id="KW-0611">Plant defense</keyword>
<dbReference type="EMBL" id="X98867">
    <property type="protein sequence ID" value="CAA67375.1"/>
    <property type="molecule type" value="mRNA"/>
</dbReference>
<dbReference type="PIR" id="T09659">
    <property type="entry name" value="T09659"/>
</dbReference>
<dbReference type="SMR" id="Q43560"/>
<dbReference type="GO" id="GO:0005737">
    <property type="term" value="C:cytoplasm"/>
    <property type="evidence" value="ECO:0007669"/>
    <property type="project" value="UniProtKB-SubCell"/>
</dbReference>
<dbReference type="GO" id="GO:0005634">
    <property type="term" value="C:nucleus"/>
    <property type="evidence" value="ECO:0007669"/>
    <property type="project" value="TreeGrafter"/>
</dbReference>
<dbReference type="GO" id="GO:0010427">
    <property type="term" value="F:abscisic acid binding"/>
    <property type="evidence" value="ECO:0007669"/>
    <property type="project" value="InterPro"/>
</dbReference>
<dbReference type="GO" id="GO:0004864">
    <property type="term" value="F:protein phosphatase inhibitor activity"/>
    <property type="evidence" value="ECO:0007669"/>
    <property type="project" value="InterPro"/>
</dbReference>
<dbReference type="GO" id="GO:0038023">
    <property type="term" value="F:signaling receptor activity"/>
    <property type="evidence" value="ECO:0007669"/>
    <property type="project" value="InterPro"/>
</dbReference>
<dbReference type="GO" id="GO:0009738">
    <property type="term" value="P:abscisic acid-activated signaling pathway"/>
    <property type="evidence" value="ECO:0007669"/>
    <property type="project" value="InterPro"/>
</dbReference>
<dbReference type="GO" id="GO:0006952">
    <property type="term" value="P:defense response"/>
    <property type="evidence" value="ECO:0007669"/>
    <property type="project" value="UniProtKB-KW"/>
</dbReference>
<dbReference type="CDD" id="cd07816">
    <property type="entry name" value="Bet_v1-like"/>
    <property type="match status" value="1"/>
</dbReference>
<dbReference type="FunFam" id="3.30.530.20:FF:000007">
    <property type="entry name" value="Major pollen allergen Bet v 1-A"/>
    <property type="match status" value="1"/>
</dbReference>
<dbReference type="Gene3D" id="3.30.530.20">
    <property type="match status" value="1"/>
</dbReference>
<dbReference type="InterPro" id="IPR000916">
    <property type="entry name" value="Bet_v_I/MLP"/>
</dbReference>
<dbReference type="InterPro" id="IPR024949">
    <property type="entry name" value="Bet_v_I_allergen"/>
</dbReference>
<dbReference type="InterPro" id="IPR050279">
    <property type="entry name" value="Plant_def-hormone_signal"/>
</dbReference>
<dbReference type="InterPro" id="IPR023393">
    <property type="entry name" value="START-like_dom_sf"/>
</dbReference>
<dbReference type="PANTHER" id="PTHR31213">
    <property type="entry name" value="OS08G0374000 PROTEIN-RELATED"/>
    <property type="match status" value="1"/>
</dbReference>
<dbReference type="PANTHER" id="PTHR31213:SF55">
    <property type="entry name" value="STRESS-INDUCED PROTEIN SAM22"/>
    <property type="match status" value="1"/>
</dbReference>
<dbReference type="Pfam" id="PF00407">
    <property type="entry name" value="Bet_v_1"/>
    <property type="match status" value="1"/>
</dbReference>
<dbReference type="PRINTS" id="PR00634">
    <property type="entry name" value="BETALLERGEN"/>
</dbReference>
<dbReference type="SUPFAM" id="SSF55961">
    <property type="entry name" value="Bet v1-like"/>
    <property type="match status" value="1"/>
</dbReference>
<dbReference type="PROSITE" id="PS00451">
    <property type="entry name" value="PATHOGENESIS_BETVI"/>
    <property type="match status" value="1"/>
</dbReference>
<comment type="subcellular location">
    <subcellularLocation>
        <location>Cytoplasm</location>
    </subcellularLocation>
</comment>
<comment type="tissue specificity">
    <text>High levels in roots and not detectable in hypocotyls, cotyledons, stems, leaves and flower buds of untreated plants. After induction, high levels are present in the vascular bundles of leaves.</text>
</comment>
<comment type="developmental stage">
    <text>It appears in leaves 3 hours after induction, maximum levels are reached by 24 hours and remain at a high level over a period of at least 72 hours.</text>
</comment>
<comment type="induction">
    <text>Upon contact with the plant pathogen Pseudomonas syringae pv pisi and salicylic acid.</text>
</comment>
<comment type="similarity">
    <text evidence="1">Belongs to the BetVI family.</text>
</comment>